<dbReference type="EMBL" id="M18973">
    <property type="protein sequence ID" value="AAA25335.1"/>
    <property type="molecule type" value="Genomic_DNA"/>
</dbReference>
<dbReference type="GO" id="GO:0017000">
    <property type="term" value="P:antibiotic biosynthetic process"/>
    <property type="evidence" value="ECO:0007669"/>
    <property type="project" value="UniProtKB-KW"/>
</dbReference>
<proteinExistence type="predicted"/>
<organism>
    <name type="scientific">Micromonospora echinospora</name>
    <name type="common">Micromonospora purpurea</name>
    <dbReference type="NCBI Taxonomy" id="1877"/>
    <lineage>
        <taxon>Bacteria</taxon>
        <taxon>Bacillati</taxon>
        <taxon>Actinomycetota</taxon>
        <taxon>Actinomycetes</taxon>
        <taxon>Micromonosporales</taxon>
        <taxon>Micromonosporaceae</taxon>
        <taxon>Micromonospora</taxon>
    </lineage>
</organism>
<name>CAAP_MICEC</name>
<reference key="1">
    <citation type="journal article" date="1988" name="J. Bacteriol.">
        <title>Temporally regulated tandem promoters in Micromonospora echinospora.</title>
        <authorList>
            <person name="Baum E.Z."/>
            <person name="Love S.F."/>
            <person name="Rothstein D.M."/>
        </authorList>
    </citation>
    <scope>NUCLEOTIDE SEQUENCE [GENOMIC DNA]</scope>
    <source>
        <strain>NRRL 15839</strain>
    </source>
</reference>
<keyword id="KW-0045">Antibiotic biosynthesis</keyword>
<sequence length="32" mass="3393">MTPTLTPPPETVAPPAADERCDRCNAAGKLRI</sequence>
<protein>
    <recommendedName>
        <fullName>Calichemicin antitumor antibiotic biosynthesis protein</fullName>
    </recommendedName>
</protein>
<accession>P21162</accession>
<feature type="chain" id="PRO_0000089266" description="Calichemicin antitumor antibiotic biosynthesis protein">
    <location>
        <begin position="1"/>
        <end position="32" status="greater than"/>
    </location>
</feature>
<feature type="non-terminal residue">
    <location>
        <position position="32"/>
    </location>
</feature>